<gene>
    <name evidence="1" type="primary">purM</name>
    <name type="ordered locus">Ssed_1845</name>
</gene>
<reference key="1">
    <citation type="submission" date="2007-08" db="EMBL/GenBank/DDBJ databases">
        <title>Complete sequence of Shewanella sediminis HAW-EB3.</title>
        <authorList>
            <consortium name="US DOE Joint Genome Institute"/>
            <person name="Copeland A."/>
            <person name="Lucas S."/>
            <person name="Lapidus A."/>
            <person name="Barry K."/>
            <person name="Glavina del Rio T."/>
            <person name="Dalin E."/>
            <person name="Tice H."/>
            <person name="Pitluck S."/>
            <person name="Chertkov O."/>
            <person name="Brettin T."/>
            <person name="Bruce D."/>
            <person name="Detter J.C."/>
            <person name="Han C."/>
            <person name="Schmutz J."/>
            <person name="Larimer F."/>
            <person name="Land M."/>
            <person name="Hauser L."/>
            <person name="Kyrpides N."/>
            <person name="Kim E."/>
            <person name="Zhao J.-S."/>
            <person name="Richardson P."/>
        </authorList>
    </citation>
    <scope>NUCLEOTIDE SEQUENCE [LARGE SCALE GENOMIC DNA]</scope>
    <source>
        <strain>HAW-EB3</strain>
    </source>
</reference>
<proteinExistence type="inferred from homology"/>
<comment type="catalytic activity">
    <reaction evidence="1">
        <text>2-formamido-N(1)-(5-O-phospho-beta-D-ribosyl)acetamidine + ATP = 5-amino-1-(5-phospho-beta-D-ribosyl)imidazole + ADP + phosphate + H(+)</text>
        <dbReference type="Rhea" id="RHEA:23032"/>
        <dbReference type="ChEBI" id="CHEBI:15378"/>
        <dbReference type="ChEBI" id="CHEBI:30616"/>
        <dbReference type="ChEBI" id="CHEBI:43474"/>
        <dbReference type="ChEBI" id="CHEBI:137981"/>
        <dbReference type="ChEBI" id="CHEBI:147287"/>
        <dbReference type="ChEBI" id="CHEBI:456216"/>
        <dbReference type="EC" id="6.3.3.1"/>
    </reaction>
</comment>
<comment type="pathway">
    <text evidence="1">Purine metabolism; IMP biosynthesis via de novo pathway; 5-amino-1-(5-phospho-D-ribosyl)imidazole from N(2)-formyl-N(1)-(5-phospho-D-ribosyl)glycinamide: step 2/2.</text>
</comment>
<comment type="subcellular location">
    <subcellularLocation>
        <location evidence="1">Cytoplasm</location>
    </subcellularLocation>
</comment>
<comment type="similarity">
    <text evidence="1">Belongs to the AIR synthase family.</text>
</comment>
<organism>
    <name type="scientific">Shewanella sediminis (strain HAW-EB3)</name>
    <dbReference type="NCBI Taxonomy" id="425104"/>
    <lineage>
        <taxon>Bacteria</taxon>
        <taxon>Pseudomonadati</taxon>
        <taxon>Pseudomonadota</taxon>
        <taxon>Gammaproteobacteria</taxon>
        <taxon>Alteromonadales</taxon>
        <taxon>Shewanellaceae</taxon>
        <taxon>Shewanella</taxon>
    </lineage>
</organism>
<name>PUR5_SHESH</name>
<dbReference type="EC" id="6.3.3.1" evidence="1"/>
<dbReference type="EMBL" id="CP000821">
    <property type="protein sequence ID" value="ABV36456.1"/>
    <property type="molecule type" value="Genomic_DNA"/>
</dbReference>
<dbReference type="RefSeq" id="WP_012142192.1">
    <property type="nucleotide sequence ID" value="NC_009831.1"/>
</dbReference>
<dbReference type="SMR" id="A8FUD3"/>
<dbReference type="STRING" id="425104.Ssed_1845"/>
<dbReference type="KEGG" id="sse:Ssed_1845"/>
<dbReference type="eggNOG" id="COG0150">
    <property type="taxonomic scope" value="Bacteria"/>
</dbReference>
<dbReference type="HOGENOM" id="CLU_047116_0_0_6"/>
<dbReference type="OrthoDB" id="9777881at2"/>
<dbReference type="UniPathway" id="UPA00074">
    <property type="reaction ID" value="UER00129"/>
</dbReference>
<dbReference type="Proteomes" id="UP000002015">
    <property type="component" value="Chromosome"/>
</dbReference>
<dbReference type="GO" id="GO:0005829">
    <property type="term" value="C:cytosol"/>
    <property type="evidence" value="ECO:0007669"/>
    <property type="project" value="TreeGrafter"/>
</dbReference>
<dbReference type="GO" id="GO:0005524">
    <property type="term" value="F:ATP binding"/>
    <property type="evidence" value="ECO:0007669"/>
    <property type="project" value="UniProtKB-KW"/>
</dbReference>
<dbReference type="GO" id="GO:0004637">
    <property type="term" value="F:phosphoribosylamine-glycine ligase activity"/>
    <property type="evidence" value="ECO:0007669"/>
    <property type="project" value="TreeGrafter"/>
</dbReference>
<dbReference type="GO" id="GO:0004641">
    <property type="term" value="F:phosphoribosylformylglycinamidine cyclo-ligase activity"/>
    <property type="evidence" value="ECO:0007669"/>
    <property type="project" value="UniProtKB-UniRule"/>
</dbReference>
<dbReference type="GO" id="GO:0006189">
    <property type="term" value="P:'de novo' IMP biosynthetic process"/>
    <property type="evidence" value="ECO:0007669"/>
    <property type="project" value="UniProtKB-UniRule"/>
</dbReference>
<dbReference type="GO" id="GO:0046084">
    <property type="term" value="P:adenine biosynthetic process"/>
    <property type="evidence" value="ECO:0007669"/>
    <property type="project" value="TreeGrafter"/>
</dbReference>
<dbReference type="CDD" id="cd02196">
    <property type="entry name" value="PurM"/>
    <property type="match status" value="1"/>
</dbReference>
<dbReference type="FunFam" id="3.30.1330.10:FF:000001">
    <property type="entry name" value="Phosphoribosylformylglycinamidine cyclo-ligase"/>
    <property type="match status" value="1"/>
</dbReference>
<dbReference type="FunFam" id="3.90.650.10:FF:000001">
    <property type="entry name" value="Phosphoribosylformylglycinamidine cyclo-ligase"/>
    <property type="match status" value="1"/>
</dbReference>
<dbReference type="Gene3D" id="3.90.650.10">
    <property type="entry name" value="PurM-like C-terminal domain"/>
    <property type="match status" value="1"/>
</dbReference>
<dbReference type="Gene3D" id="3.30.1330.10">
    <property type="entry name" value="PurM-like, N-terminal domain"/>
    <property type="match status" value="1"/>
</dbReference>
<dbReference type="HAMAP" id="MF_00741">
    <property type="entry name" value="AIRS"/>
    <property type="match status" value="1"/>
</dbReference>
<dbReference type="InterPro" id="IPR010918">
    <property type="entry name" value="PurM-like_C_dom"/>
</dbReference>
<dbReference type="InterPro" id="IPR036676">
    <property type="entry name" value="PurM-like_C_sf"/>
</dbReference>
<dbReference type="InterPro" id="IPR016188">
    <property type="entry name" value="PurM-like_N"/>
</dbReference>
<dbReference type="InterPro" id="IPR036921">
    <property type="entry name" value="PurM-like_N_sf"/>
</dbReference>
<dbReference type="InterPro" id="IPR004733">
    <property type="entry name" value="PurM_cligase"/>
</dbReference>
<dbReference type="NCBIfam" id="TIGR00878">
    <property type="entry name" value="purM"/>
    <property type="match status" value="1"/>
</dbReference>
<dbReference type="PANTHER" id="PTHR10520:SF12">
    <property type="entry name" value="TRIFUNCTIONAL PURINE BIOSYNTHETIC PROTEIN ADENOSINE-3"/>
    <property type="match status" value="1"/>
</dbReference>
<dbReference type="PANTHER" id="PTHR10520">
    <property type="entry name" value="TRIFUNCTIONAL PURINE BIOSYNTHETIC PROTEIN ADENOSINE-3-RELATED"/>
    <property type="match status" value="1"/>
</dbReference>
<dbReference type="Pfam" id="PF00586">
    <property type="entry name" value="AIRS"/>
    <property type="match status" value="1"/>
</dbReference>
<dbReference type="Pfam" id="PF02769">
    <property type="entry name" value="AIRS_C"/>
    <property type="match status" value="1"/>
</dbReference>
<dbReference type="SUPFAM" id="SSF56042">
    <property type="entry name" value="PurM C-terminal domain-like"/>
    <property type="match status" value="1"/>
</dbReference>
<dbReference type="SUPFAM" id="SSF55326">
    <property type="entry name" value="PurM N-terminal domain-like"/>
    <property type="match status" value="1"/>
</dbReference>
<evidence type="ECO:0000255" key="1">
    <source>
        <dbReference type="HAMAP-Rule" id="MF_00741"/>
    </source>
</evidence>
<protein>
    <recommendedName>
        <fullName evidence="1">Phosphoribosylformylglycinamidine cyclo-ligase</fullName>
        <ecNumber evidence="1">6.3.3.1</ecNumber>
    </recommendedName>
    <alternativeName>
        <fullName evidence="1">AIR synthase</fullName>
    </alternativeName>
    <alternativeName>
        <fullName evidence="1">AIRS</fullName>
    </alternativeName>
    <alternativeName>
        <fullName evidence="1">Phosphoribosyl-aminoimidazole synthetase</fullName>
    </alternativeName>
</protein>
<sequence>MSTPTQLSYKDAGVDIDAGNALVDNIKTAVKRTHRPEIMGNLGGFGALCELPTKYKHPVLVSGTDGVGTKLRLAIDHKKHDTVGIDLVAMCSNDLIVSGAEPLFFLDYYATGKLDVEAATSVVKGIAEGCVQSGCALIGGETAEMPGMYEGDDYDLAGFCVGVVEKADIIDGSKVVAGDSLIALASSGPHSNGFSLIRKVLEVSEADPQLNLEGKPLIDHLLEPTKIYVKSLLKLLEQTDVHAMAHITGGGFWENIPRVLPEDCKAVVKGDSWQWPTVFNWLMENGNIAEFEMYRTFNCGVGMVVALPSEKVDAALTLLNAEGENAWLIGDIAKRNGDEEQVEIL</sequence>
<feature type="chain" id="PRO_1000083465" description="Phosphoribosylformylglycinamidine cyclo-ligase">
    <location>
        <begin position="1"/>
        <end position="345"/>
    </location>
</feature>
<keyword id="KW-0067">ATP-binding</keyword>
<keyword id="KW-0963">Cytoplasm</keyword>
<keyword id="KW-0436">Ligase</keyword>
<keyword id="KW-0547">Nucleotide-binding</keyword>
<keyword id="KW-0658">Purine biosynthesis</keyword>
<keyword id="KW-1185">Reference proteome</keyword>
<accession>A8FUD3</accession>